<feature type="chain" id="PRO_0000127647" description="Selenide, water dikinase">
    <location>
        <begin position="1"/>
        <end position="335"/>
    </location>
</feature>
<feature type="active site" evidence="2">
    <location>
        <position position="7"/>
    </location>
</feature>
<feature type="binding site" description="in other chain" evidence="2">
    <location>
        <position position="10"/>
    </location>
    <ligand>
        <name>ATP</name>
        <dbReference type="ChEBI" id="CHEBI:30616"/>
        <note>ligand shared between dimeric partners</note>
    </ligand>
</feature>
<feature type="binding site" description="in other chain" evidence="2">
    <location>
        <begin position="36"/>
        <end position="38"/>
    </location>
    <ligand>
        <name>ATP</name>
        <dbReference type="ChEBI" id="CHEBI:30616"/>
        <note>ligand shared between dimeric partners</note>
    </ligand>
</feature>
<feature type="binding site" evidence="2">
    <location>
        <position position="39"/>
    </location>
    <ligand>
        <name>Mg(2+)</name>
        <dbReference type="ChEBI" id="CHEBI:18420"/>
    </ligand>
</feature>
<feature type="binding site" description="in other chain" evidence="2">
    <location>
        <position position="55"/>
    </location>
    <ligand>
        <name>ATP</name>
        <dbReference type="ChEBI" id="CHEBI:30616"/>
        <note>ligand shared between dimeric partners</note>
    </ligand>
</feature>
<feature type="binding site" description="in other chain" evidence="2">
    <location>
        <position position="78"/>
    </location>
    <ligand>
        <name>ATP</name>
        <dbReference type="ChEBI" id="CHEBI:30616"/>
        <note>ligand shared between dimeric partners</note>
    </ligand>
</feature>
<feature type="binding site" evidence="2">
    <location>
        <position position="78"/>
    </location>
    <ligand>
        <name>Mg(2+)</name>
        <dbReference type="ChEBI" id="CHEBI:18420"/>
    </ligand>
</feature>
<feature type="binding site" evidence="2">
    <location>
        <begin position="126"/>
        <end position="128"/>
    </location>
    <ligand>
        <name>ATP</name>
        <dbReference type="ChEBI" id="CHEBI:30616"/>
        <note>ligand shared between dimeric partners</note>
    </ligand>
</feature>
<feature type="binding site" evidence="2">
    <location>
        <position position="232"/>
    </location>
    <ligand>
        <name>Mg(2+)</name>
        <dbReference type="ChEBI" id="CHEBI:18420"/>
    </ligand>
</feature>
<feature type="site" description="Important for catalytic activity" evidence="2">
    <location>
        <position position="10"/>
    </location>
</feature>
<feature type="non-standard amino acid" description="Selenocysteine" evidence="1">
    <location>
        <position position="7"/>
    </location>
</feature>
<protein>
    <recommendedName>
        <fullName evidence="2">Selenide, water dikinase</fullName>
        <ecNumber evidence="2">2.7.9.3</ecNumber>
    </recommendedName>
    <alternativeName>
        <fullName evidence="2">Selenium donor protein</fullName>
    </alternativeName>
    <alternativeName>
        <fullName evidence="2">Selenophosphate synthase</fullName>
    </alternativeName>
</protein>
<evidence type="ECO:0000255" key="1"/>
<evidence type="ECO:0000255" key="2">
    <source>
        <dbReference type="HAMAP-Rule" id="MF_00625"/>
    </source>
</evidence>
<evidence type="ECO:0000305" key="3"/>
<keyword id="KW-0067">ATP-binding</keyword>
<keyword id="KW-0418">Kinase</keyword>
<keyword id="KW-0460">Magnesium</keyword>
<keyword id="KW-0479">Metal-binding</keyword>
<keyword id="KW-0547">Nucleotide-binding</keyword>
<keyword id="KW-1185">Reference proteome</keyword>
<keyword id="KW-0711">Selenium</keyword>
<keyword id="KW-0712">Selenocysteine</keyword>
<keyword id="KW-0808">Transferase</keyword>
<reference key="1">
    <citation type="journal article" date="2004" name="J. Bacteriol.">
        <title>Complete genome sequence of the genetically tractable hydrogenotrophic methanogen Methanococcus maripaludis.</title>
        <authorList>
            <person name="Hendrickson E.L."/>
            <person name="Kaul R."/>
            <person name="Zhou Y."/>
            <person name="Bovee D."/>
            <person name="Chapman P."/>
            <person name="Chung J."/>
            <person name="Conway de Macario E."/>
            <person name="Dodsworth J.A."/>
            <person name="Gillett W."/>
            <person name="Graham D.E."/>
            <person name="Hackett M."/>
            <person name="Haydock A.K."/>
            <person name="Kang A."/>
            <person name="Land M.L."/>
            <person name="Levy R."/>
            <person name="Lie T.J."/>
            <person name="Major T.A."/>
            <person name="Moore B.C."/>
            <person name="Porat I."/>
            <person name="Palmeiri A."/>
            <person name="Rouse G."/>
            <person name="Saenphimmachak C."/>
            <person name="Soell D."/>
            <person name="Van Dien S."/>
            <person name="Wang T."/>
            <person name="Whitman W.B."/>
            <person name="Xia Q."/>
            <person name="Zhang Y."/>
            <person name="Larimer F.W."/>
            <person name="Olson M.V."/>
            <person name="Leigh J.A."/>
        </authorList>
    </citation>
    <scope>NUCLEOTIDE SEQUENCE [LARGE SCALE GENOMIC DNA]</scope>
    <source>
        <strain>DSM 14266 / JCM 13030 / NBRC 101832 / S2 / LL</strain>
    </source>
</reference>
<proteinExistence type="inferred from homology"/>
<sequence>MVTLHGUACKLPDTELENLVKGIISEDDLKHAKVGLGDDAAVVIKNGMAIVKTIDVFTPIVDDPYLQGRIAACNSTSDVYAMGISEIIGGLVFLGIPPELPVPVAKKMLQGFQDFCRENDTTIIGGHTILNPWPLIGGSITGVGKEEDILTKAGCKNGDVLILTKPLGNQSAMALSRVTEEFEDLIDIPKEEQKYIFEKTIELMTTSNRIALLHLRELENELGEKIANAMTDVTGFGILGHSQEMAEQSDVEIEISCLPVIKGTPELASLFGHALCSGKGAETAGGLLISTKPEYKDKLIQKFKENNVYAFEVGKIVNNGVGIAKLSENVEILEI</sequence>
<gene>
    <name evidence="2" type="primary">selD</name>
    <name type="ordered locus">MMP0904</name>
</gene>
<accession>P60820</accession>
<organism>
    <name type="scientific">Methanococcus maripaludis (strain DSM 14266 / JCM 13030 / NBRC 101832 / S2 / LL)</name>
    <dbReference type="NCBI Taxonomy" id="267377"/>
    <lineage>
        <taxon>Archaea</taxon>
        <taxon>Methanobacteriati</taxon>
        <taxon>Methanobacteriota</taxon>
        <taxon>Methanomada group</taxon>
        <taxon>Methanococci</taxon>
        <taxon>Methanococcales</taxon>
        <taxon>Methanococcaceae</taxon>
        <taxon>Methanococcus</taxon>
    </lineage>
</organism>
<comment type="function">
    <text evidence="2">Synthesizes selenophosphate from selenide and ATP.</text>
</comment>
<comment type="catalytic activity">
    <reaction evidence="2">
        <text>hydrogenselenide + ATP + H2O = selenophosphate + AMP + phosphate + 2 H(+)</text>
        <dbReference type="Rhea" id="RHEA:18737"/>
        <dbReference type="ChEBI" id="CHEBI:15377"/>
        <dbReference type="ChEBI" id="CHEBI:15378"/>
        <dbReference type="ChEBI" id="CHEBI:16144"/>
        <dbReference type="ChEBI" id="CHEBI:29317"/>
        <dbReference type="ChEBI" id="CHEBI:30616"/>
        <dbReference type="ChEBI" id="CHEBI:43474"/>
        <dbReference type="ChEBI" id="CHEBI:456215"/>
        <dbReference type="EC" id="2.7.9.3"/>
    </reaction>
</comment>
<comment type="cofactor">
    <cofactor evidence="2">
        <name>Mg(2+)</name>
        <dbReference type="ChEBI" id="CHEBI:18420"/>
    </cofactor>
    <text evidence="2">Binds 1 Mg(2+) ion per monomer.</text>
</comment>
<comment type="subunit">
    <text evidence="2">Homodimer.</text>
</comment>
<comment type="similarity">
    <text evidence="2 3">Belongs to the selenophosphate synthase 1 family. Class I subfamily.</text>
</comment>
<comment type="sequence caution" evidence="3">
    <conflict type="erroneous termination">
        <sequence resource="EMBL-CDS" id="CAF30460"/>
    </conflict>
    <text>Truncated C-terminus.</text>
</comment>
<dbReference type="EC" id="2.7.9.3" evidence="2"/>
<dbReference type="EMBL" id="BX950229">
    <property type="protein sequence ID" value="CAF30460.1"/>
    <property type="status" value="ALT_SEQ"/>
    <property type="molecule type" value="Genomic_DNA"/>
</dbReference>
<dbReference type="RefSeq" id="WP_081422764.1">
    <property type="nucleotide sequence ID" value="NC_005791.1"/>
</dbReference>
<dbReference type="STRING" id="267377.MMP0904"/>
<dbReference type="EnsemblBacteria" id="CAF30460">
    <property type="protein sequence ID" value="CAF30460"/>
    <property type="gene ID" value="MMP0904"/>
</dbReference>
<dbReference type="GeneID" id="2761866"/>
<dbReference type="KEGG" id="mmp:MMP0904"/>
<dbReference type="PATRIC" id="fig|267377.15.peg.932"/>
<dbReference type="eggNOG" id="arCOG00643">
    <property type="taxonomic scope" value="Archaea"/>
</dbReference>
<dbReference type="HOGENOM" id="CLU_032859_1_0_2"/>
<dbReference type="OrthoDB" id="59705at2157"/>
<dbReference type="BRENDA" id="2.7.9.3">
    <property type="organism ID" value="3262"/>
</dbReference>
<dbReference type="Proteomes" id="UP000000590">
    <property type="component" value="Chromosome"/>
</dbReference>
<dbReference type="GO" id="GO:0005737">
    <property type="term" value="C:cytoplasm"/>
    <property type="evidence" value="ECO:0007669"/>
    <property type="project" value="TreeGrafter"/>
</dbReference>
<dbReference type="GO" id="GO:0005524">
    <property type="term" value="F:ATP binding"/>
    <property type="evidence" value="ECO:0007669"/>
    <property type="project" value="UniProtKB-UniRule"/>
</dbReference>
<dbReference type="GO" id="GO:0000287">
    <property type="term" value="F:magnesium ion binding"/>
    <property type="evidence" value="ECO:0007669"/>
    <property type="project" value="UniProtKB-UniRule"/>
</dbReference>
<dbReference type="GO" id="GO:0004756">
    <property type="term" value="F:selenide, water dikinase activity"/>
    <property type="evidence" value="ECO:0007669"/>
    <property type="project" value="UniProtKB-UniRule"/>
</dbReference>
<dbReference type="GO" id="GO:0016260">
    <property type="term" value="P:selenocysteine biosynthetic process"/>
    <property type="evidence" value="ECO:0007669"/>
    <property type="project" value="InterPro"/>
</dbReference>
<dbReference type="CDD" id="cd02195">
    <property type="entry name" value="SelD"/>
    <property type="match status" value="1"/>
</dbReference>
<dbReference type="Gene3D" id="3.90.650.10">
    <property type="entry name" value="PurM-like C-terminal domain"/>
    <property type="match status" value="1"/>
</dbReference>
<dbReference type="Gene3D" id="3.30.1330.10">
    <property type="entry name" value="PurM-like, N-terminal domain"/>
    <property type="match status" value="1"/>
</dbReference>
<dbReference type="HAMAP" id="MF_00625">
    <property type="entry name" value="SelD"/>
    <property type="match status" value="1"/>
</dbReference>
<dbReference type="InterPro" id="IPR010918">
    <property type="entry name" value="PurM-like_C_dom"/>
</dbReference>
<dbReference type="InterPro" id="IPR036676">
    <property type="entry name" value="PurM-like_C_sf"/>
</dbReference>
<dbReference type="InterPro" id="IPR016188">
    <property type="entry name" value="PurM-like_N"/>
</dbReference>
<dbReference type="InterPro" id="IPR036921">
    <property type="entry name" value="PurM-like_N_sf"/>
</dbReference>
<dbReference type="InterPro" id="IPR023061">
    <property type="entry name" value="SelD_I"/>
</dbReference>
<dbReference type="InterPro" id="IPR004536">
    <property type="entry name" value="SPS/SelD"/>
</dbReference>
<dbReference type="NCBIfam" id="NF010705">
    <property type="entry name" value="PRK14105.1"/>
    <property type="match status" value="1"/>
</dbReference>
<dbReference type="NCBIfam" id="TIGR00476">
    <property type="entry name" value="selD"/>
    <property type="match status" value="1"/>
</dbReference>
<dbReference type="PANTHER" id="PTHR10256:SF0">
    <property type="entry name" value="INACTIVE SELENIDE, WATER DIKINASE-LIKE PROTEIN-RELATED"/>
    <property type="match status" value="1"/>
</dbReference>
<dbReference type="PANTHER" id="PTHR10256">
    <property type="entry name" value="SELENIDE, WATER DIKINASE"/>
    <property type="match status" value="1"/>
</dbReference>
<dbReference type="Pfam" id="PF00586">
    <property type="entry name" value="AIRS"/>
    <property type="match status" value="1"/>
</dbReference>
<dbReference type="Pfam" id="PF02769">
    <property type="entry name" value="AIRS_C"/>
    <property type="match status" value="1"/>
</dbReference>
<dbReference type="PIRSF" id="PIRSF036407">
    <property type="entry name" value="Selenphspht_syn"/>
    <property type="match status" value="1"/>
</dbReference>
<dbReference type="SUPFAM" id="SSF56042">
    <property type="entry name" value="PurM C-terminal domain-like"/>
    <property type="match status" value="1"/>
</dbReference>
<dbReference type="SUPFAM" id="SSF55326">
    <property type="entry name" value="PurM N-terminal domain-like"/>
    <property type="match status" value="1"/>
</dbReference>
<name>SELD_METMP</name>